<gene>
    <name type="ORF">SPAC959.06c</name>
</gene>
<name>YKV6_SCHPO</name>
<sequence length="225" mass="25216">MGENIEISTKVIENQEIRFRCYKADSTKIAVLAHPYAFLGGSVDDINIIALSKKINSKGFTVYVLDATTRRSALLSGKHDTMIFTLFVKYITSLNHPEYLLLGGYSYGARISMHKSITLAIDKRISHVSYLFLAPYLGLGSSILSWSWGLGFESFSTDSKVLFVWPDNDEFTREGTFETTLAKLKNRCPETTPLKLTDCSHMLSPSSRKILLETVDKWLASALNV</sequence>
<organism>
    <name type="scientific">Schizosaccharomyces pombe (strain 972 / ATCC 24843)</name>
    <name type="common">Fission yeast</name>
    <dbReference type="NCBI Taxonomy" id="284812"/>
    <lineage>
        <taxon>Eukaryota</taxon>
        <taxon>Fungi</taxon>
        <taxon>Dikarya</taxon>
        <taxon>Ascomycota</taxon>
        <taxon>Taphrinomycotina</taxon>
        <taxon>Schizosaccharomycetes</taxon>
        <taxon>Schizosaccharomycetales</taxon>
        <taxon>Schizosaccharomycetaceae</taxon>
        <taxon>Schizosaccharomyces</taxon>
    </lineage>
</organism>
<accession>P0CS92</accession>
<protein>
    <recommendedName>
        <fullName>Uncharacterized protein C959.06c</fullName>
    </recommendedName>
</protein>
<proteinExistence type="predicted"/>
<feature type="chain" id="PRO_0000417962" description="Uncharacterized protein C959.06c">
    <location>
        <begin position="1"/>
        <end position="225"/>
    </location>
</feature>
<reference key="1">
    <citation type="journal article" date="2002" name="Nature">
        <title>The genome sequence of Schizosaccharomyces pombe.</title>
        <authorList>
            <person name="Wood V."/>
            <person name="Gwilliam R."/>
            <person name="Rajandream M.A."/>
            <person name="Lyne M.H."/>
            <person name="Lyne R."/>
            <person name="Stewart A."/>
            <person name="Sgouros J.G."/>
            <person name="Peat N."/>
            <person name="Hayles J."/>
            <person name="Baker S.G."/>
            <person name="Basham D."/>
            <person name="Bowman S."/>
            <person name="Brooks K."/>
            <person name="Brown D."/>
            <person name="Brown S."/>
            <person name="Chillingworth T."/>
            <person name="Churcher C.M."/>
            <person name="Collins M."/>
            <person name="Connor R."/>
            <person name="Cronin A."/>
            <person name="Davis P."/>
            <person name="Feltwell T."/>
            <person name="Fraser A."/>
            <person name="Gentles S."/>
            <person name="Goble A."/>
            <person name="Hamlin N."/>
            <person name="Harris D.E."/>
            <person name="Hidalgo J."/>
            <person name="Hodgson G."/>
            <person name="Holroyd S."/>
            <person name="Hornsby T."/>
            <person name="Howarth S."/>
            <person name="Huckle E.J."/>
            <person name="Hunt S."/>
            <person name="Jagels K."/>
            <person name="James K.D."/>
            <person name="Jones L."/>
            <person name="Jones M."/>
            <person name="Leather S."/>
            <person name="McDonald S."/>
            <person name="McLean J."/>
            <person name="Mooney P."/>
            <person name="Moule S."/>
            <person name="Mungall K.L."/>
            <person name="Murphy L.D."/>
            <person name="Niblett D."/>
            <person name="Odell C."/>
            <person name="Oliver K."/>
            <person name="O'Neil S."/>
            <person name="Pearson D."/>
            <person name="Quail M.A."/>
            <person name="Rabbinowitsch E."/>
            <person name="Rutherford K.M."/>
            <person name="Rutter S."/>
            <person name="Saunders D."/>
            <person name="Seeger K."/>
            <person name="Sharp S."/>
            <person name="Skelton J."/>
            <person name="Simmonds M.N."/>
            <person name="Squares R."/>
            <person name="Squares S."/>
            <person name="Stevens K."/>
            <person name="Taylor K."/>
            <person name="Taylor R.G."/>
            <person name="Tivey A."/>
            <person name="Walsh S.V."/>
            <person name="Warren T."/>
            <person name="Whitehead S."/>
            <person name="Woodward J.R."/>
            <person name="Volckaert G."/>
            <person name="Aert R."/>
            <person name="Robben J."/>
            <person name="Grymonprez B."/>
            <person name="Weltjens I."/>
            <person name="Vanstreels E."/>
            <person name="Rieger M."/>
            <person name="Schaefer M."/>
            <person name="Mueller-Auer S."/>
            <person name="Gabel C."/>
            <person name="Fuchs M."/>
            <person name="Duesterhoeft A."/>
            <person name="Fritzc C."/>
            <person name="Holzer E."/>
            <person name="Moestl D."/>
            <person name="Hilbert H."/>
            <person name="Borzym K."/>
            <person name="Langer I."/>
            <person name="Beck A."/>
            <person name="Lehrach H."/>
            <person name="Reinhardt R."/>
            <person name="Pohl T.M."/>
            <person name="Eger P."/>
            <person name="Zimmermann W."/>
            <person name="Wedler H."/>
            <person name="Wambutt R."/>
            <person name="Purnelle B."/>
            <person name="Goffeau A."/>
            <person name="Cadieu E."/>
            <person name="Dreano S."/>
            <person name="Gloux S."/>
            <person name="Lelaure V."/>
            <person name="Mottier S."/>
            <person name="Galibert F."/>
            <person name="Aves S.J."/>
            <person name="Xiang Z."/>
            <person name="Hunt C."/>
            <person name="Moore K."/>
            <person name="Hurst S.M."/>
            <person name="Lucas M."/>
            <person name="Rochet M."/>
            <person name="Gaillardin C."/>
            <person name="Tallada V.A."/>
            <person name="Garzon A."/>
            <person name="Thode G."/>
            <person name="Daga R.R."/>
            <person name="Cruzado L."/>
            <person name="Jimenez J."/>
            <person name="Sanchez M."/>
            <person name="del Rey F."/>
            <person name="Benito J."/>
            <person name="Dominguez A."/>
            <person name="Revuelta J.L."/>
            <person name="Moreno S."/>
            <person name="Armstrong J."/>
            <person name="Forsburg S.L."/>
            <person name="Cerutti L."/>
            <person name="Lowe T."/>
            <person name="McCombie W.R."/>
            <person name="Paulsen I."/>
            <person name="Potashkin J."/>
            <person name="Shpakovski G.V."/>
            <person name="Ussery D."/>
            <person name="Barrell B.G."/>
            <person name="Nurse P."/>
        </authorList>
    </citation>
    <scope>NUCLEOTIDE SEQUENCE [LARGE SCALE GENOMIC DNA]</scope>
    <source>
        <strain>972 / ATCC 24843</strain>
    </source>
</reference>
<reference key="2">
    <citation type="journal article" date="2011" name="Science">
        <title>Comparative functional genomics of the fission yeasts.</title>
        <authorList>
            <person name="Rhind N."/>
            <person name="Chen Z."/>
            <person name="Yassour M."/>
            <person name="Thompson D.A."/>
            <person name="Haas B.J."/>
            <person name="Habib N."/>
            <person name="Wapinski I."/>
            <person name="Roy S."/>
            <person name="Lin M.F."/>
            <person name="Heiman D.I."/>
            <person name="Young S.K."/>
            <person name="Furuya K."/>
            <person name="Guo Y."/>
            <person name="Pidoux A."/>
            <person name="Chen H.M."/>
            <person name="Robbertse B."/>
            <person name="Goldberg J.M."/>
            <person name="Aoki K."/>
            <person name="Bayne E.H."/>
            <person name="Berlin A.M."/>
            <person name="Desjardins C.A."/>
            <person name="Dobbs E."/>
            <person name="Dukaj L."/>
            <person name="Fan L."/>
            <person name="FitzGerald M.G."/>
            <person name="French C."/>
            <person name="Gujja S."/>
            <person name="Hansen K."/>
            <person name="Keifenheim D."/>
            <person name="Levin J.Z."/>
            <person name="Mosher R.A."/>
            <person name="Mueller C.A."/>
            <person name="Pfiffner J."/>
            <person name="Priest M."/>
            <person name="Russ C."/>
            <person name="Smialowska A."/>
            <person name="Swoboda P."/>
            <person name="Sykes S.M."/>
            <person name="Vaughn M."/>
            <person name="Vengrova S."/>
            <person name="Yoder R."/>
            <person name="Zeng Q."/>
            <person name="Allshire R."/>
            <person name="Baulcombe D."/>
            <person name="Birren B.W."/>
            <person name="Brown W."/>
            <person name="Ekwall K."/>
            <person name="Kellis M."/>
            <person name="Leatherwood J."/>
            <person name="Levin H."/>
            <person name="Margalit H."/>
            <person name="Martienssen R."/>
            <person name="Nieduszynski C.A."/>
            <person name="Spatafora J.W."/>
            <person name="Friedman N."/>
            <person name="Dalgaard J.Z."/>
            <person name="Baumann P."/>
            <person name="Niki H."/>
            <person name="Regev A."/>
            <person name="Nusbaum C."/>
        </authorList>
    </citation>
    <scope>REVISION OF GENE MODEL</scope>
</reference>
<dbReference type="EMBL" id="CU329670">
    <property type="protein sequence ID" value="CAB93013.1"/>
    <property type="molecule type" value="Genomic_DNA"/>
</dbReference>
<dbReference type="RefSeq" id="NP_594173.1">
    <property type="nucleotide sequence ID" value="NM_001019598.1"/>
</dbReference>
<dbReference type="SMR" id="P0CS92"/>
<dbReference type="BioGRID" id="4254380">
    <property type="interactions" value="3"/>
</dbReference>
<dbReference type="STRING" id="284812.P0CS92"/>
<dbReference type="ESTHER" id="schpo-ykv6">
    <property type="family name" value="AlphaBeta_hydrolase"/>
</dbReference>
<dbReference type="PaxDb" id="4896-SPAC959.06c.1"/>
<dbReference type="EnsemblFungi" id="SPAC959.06c.1">
    <property type="protein sequence ID" value="SPAC959.06c.1:pep"/>
    <property type="gene ID" value="SPAC959.06c"/>
</dbReference>
<dbReference type="KEGG" id="spo:14218018"/>
<dbReference type="PomBase" id="SPAC959.06c"/>
<dbReference type="VEuPathDB" id="FungiDB:SPAC959.06c"/>
<dbReference type="eggNOG" id="ENOG502SE7E">
    <property type="taxonomic scope" value="Eukaryota"/>
</dbReference>
<dbReference type="HOGENOM" id="CLU_1289606_0_0_1"/>
<dbReference type="InParanoid" id="P0CS92"/>
<dbReference type="OMA" id="LTGYWNV"/>
<dbReference type="PRO" id="PR:P0CS92"/>
<dbReference type="Proteomes" id="UP000002485">
    <property type="component" value="Chromosome I"/>
</dbReference>
<dbReference type="GO" id="GO:0003824">
    <property type="term" value="F:catalytic activity"/>
    <property type="evidence" value="ECO:0000255"/>
    <property type="project" value="PomBase"/>
</dbReference>
<dbReference type="Gene3D" id="3.40.50.1820">
    <property type="entry name" value="alpha/beta hydrolase"/>
    <property type="match status" value="1"/>
</dbReference>
<dbReference type="InterPro" id="IPR029058">
    <property type="entry name" value="AB_hydrolase_fold"/>
</dbReference>
<dbReference type="PANTHER" id="PTHR42103:SF2">
    <property type="entry name" value="AB HYDROLASE-1 DOMAIN-CONTAINING PROTEIN"/>
    <property type="match status" value="1"/>
</dbReference>
<dbReference type="PANTHER" id="PTHR42103">
    <property type="entry name" value="ALPHA/BETA-HYDROLASES SUPERFAMILY PROTEIN"/>
    <property type="match status" value="1"/>
</dbReference>
<dbReference type="SUPFAM" id="SSF53474">
    <property type="entry name" value="alpha/beta-Hydrolases"/>
    <property type="match status" value="1"/>
</dbReference>
<keyword id="KW-1185">Reference proteome</keyword>